<keyword id="KW-0143">Chaperone</keyword>
<keyword id="KW-0963">Cytoplasm</keyword>
<keyword id="KW-0235">DNA replication</keyword>
<keyword id="KW-0479">Metal-binding</keyword>
<keyword id="KW-0677">Repeat</keyword>
<keyword id="KW-0346">Stress response</keyword>
<keyword id="KW-0862">Zinc</keyword>
<keyword id="KW-0863">Zinc-finger</keyword>
<organism>
    <name type="scientific">Lactobacillus gasseri (strain ATCC 33323 / DSM 20243 / BCRC 14619 / CIP 102991 / JCM 1131 / KCTC 3163 / NCIMB 11718 / NCTC 13722 / AM63)</name>
    <dbReference type="NCBI Taxonomy" id="324831"/>
    <lineage>
        <taxon>Bacteria</taxon>
        <taxon>Bacillati</taxon>
        <taxon>Bacillota</taxon>
        <taxon>Bacilli</taxon>
        <taxon>Lactobacillales</taxon>
        <taxon>Lactobacillaceae</taxon>
        <taxon>Lactobacillus</taxon>
    </lineage>
</organism>
<proteinExistence type="inferred from homology"/>
<comment type="function">
    <text evidence="1">Participates actively in the response to hyperosmotic and heat shock by preventing the aggregation of stress-denatured proteins and by disaggregating proteins, also in an autonomous, DnaK-independent fashion. Unfolded proteins bind initially to DnaJ; upon interaction with the DnaJ-bound protein, DnaK hydrolyzes its bound ATP, resulting in the formation of a stable complex. GrpE releases ADP from DnaK; ATP binding to DnaK triggers the release of the substrate protein, thus completing the reaction cycle. Several rounds of ATP-dependent interactions between DnaJ, DnaK and GrpE are required for fully efficient folding. Also involved, together with DnaK and GrpE, in the DNA replication of plasmids through activation of initiation proteins.</text>
</comment>
<comment type="cofactor">
    <cofactor evidence="1">
        <name>Zn(2+)</name>
        <dbReference type="ChEBI" id="CHEBI:29105"/>
    </cofactor>
    <text evidence="1">Binds 2 Zn(2+) ions per monomer.</text>
</comment>
<comment type="subunit">
    <text evidence="1">Homodimer.</text>
</comment>
<comment type="subcellular location">
    <subcellularLocation>
        <location evidence="1">Cytoplasm</location>
    </subcellularLocation>
</comment>
<comment type="domain">
    <text evidence="1">The J domain is necessary and sufficient to stimulate DnaK ATPase activity. Zinc center 1 plays an important role in the autonomous, DnaK-independent chaperone activity of DnaJ. Zinc center 2 is essential for interaction with DnaK and for DnaJ activity.</text>
</comment>
<comment type="similarity">
    <text evidence="1">Belongs to the DnaJ family.</text>
</comment>
<feature type="chain" id="PRO_1000085214" description="Chaperone protein DnaJ">
    <location>
        <begin position="1"/>
        <end position="388"/>
    </location>
</feature>
<feature type="domain" description="J" evidence="1">
    <location>
        <begin position="5"/>
        <end position="69"/>
    </location>
</feature>
<feature type="repeat" description="CXXCXGXG motif">
    <location>
        <begin position="158"/>
        <end position="165"/>
    </location>
</feature>
<feature type="repeat" description="CXXCXGXG motif">
    <location>
        <begin position="175"/>
        <end position="182"/>
    </location>
</feature>
<feature type="repeat" description="CXXCXGXG motif">
    <location>
        <begin position="201"/>
        <end position="208"/>
    </location>
</feature>
<feature type="repeat" description="CXXCXGXG motif">
    <location>
        <begin position="215"/>
        <end position="222"/>
    </location>
</feature>
<feature type="zinc finger region" description="CR-type" evidence="1">
    <location>
        <begin position="145"/>
        <end position="227"/>
    </location>
</feature>
<feature type="binding site" evidence="1">
    <location>
        <position position="158"/>
    </location>
    <ligand>
        <name>Zn(2+)</name>
        <dbReference type="ChEBI" id="CHEBI:29105"/>
        <label>1</label>
    </ligand>
</feature>
<feature type="binding site" evidence="1">
    <location>
        <position position="161"/>
    </location>
    <ligand>
        <name>Zn(2+)</name>
        <dbReference type="ChEBI" id="CHEBI:29105"/>
        <label>1</label>
    </ligand>
</feature>
<feature type="binding site" evidence="1">
    <location>
        <position position="175"/>
    </location>
    <ligand>
        <name>Zn(2+)</name>
        <dbReference type="ChEBI" id="CHEBI:29105"/>
        <label>2</label>
    </ligand>
</feature>
<feature type="binding site" evidence="1">
    <location>
        <position position="178"/>
    </location>
    <ligand>
        <name>Zn(2+)</name>
        <dbReference type="ChEBI" id="CHEBI:29105"/>
        <label>2</label>
    </ligand>
</feature>
<feature type="binding site" evidence="1">
    <location>
        <position position="201"/>
    </location>
    <ligand>
        <name>Zn(2+)</name>
        <dbReference type="ChEBI" id="CHEBI:29105"/>
        <label>2</label>
    </ligand>
</feature>
<feature type="binding site" evidence="1">
    <location>
        <position position="204"/>
    </location>
    <ligand>
        <name>Zn(2+)</name>
        <dbReference type="ChEBI" id="CHEBI:29105"/>
        <label>2</label>
    </ligand>
</feature>
<feature type="binding site" evidence="1">
    <location>
        <position position="215"/>
    </location>
    <ligand>
        <name>Zn(2+)</name>
        <dbReference type="ChEBI" id="CHEBI:29105"/>
        <label>1</label>
    </ligand>
</feature>
<feature type="binding site" evidence="1">
    <location>
        <position position="218"/>
    </location>
    <ligand>
        <name>Zn(2+)</name>
        <dbReference type="ChEBI" id="CHEBI:29105"/>
        <label>1</label>
    </ligand>
</feature>
<accession>Q044A8</accession>
<reference key="1">
    <citation type="journal article" date="2006" name="Proc. Natl. Acad. Sci. U.S.A.">
        <title>Comparative genomics of the lactic acid bacteria.</title>
        <authorList>
            <person name="Makarova K.S."/>
            <person name="Slesarev A."/>
            <person name="Wolf Y.I."/>
            <person name="Sorokin A."/>
            <person name="Mirkin B."/>
            <person name="Koonin E.V."/>
            <person name="Pavlov A."/>
            <person name="Pavlova N."/>
            <person name="Karamychev V."/>
            <person name="Polouchine N."/>
            <person name="Shakhova V."/>
            <person name="Grigoriev I."/>
            <person name="Lou Y."/>
            <person name="Rohksar D."/>
            <person name="Lucas S."/>
            <person name="Huang K."/>
            <person name="Goodstein D.M."/>
            <person name="Hawkins T."/>
            <person name="Plengvidhya V."/>
            <person name="Welker D."/>
            <person name="Hughes J."/>
            <person name="Goh Y."/>
            <person name="Benson A."/>
            <person name="Baldwin K."/>
            <person name="Lee J.-H."/>
            <person name="Diaz-Muniz I."/>
            <person name="Dosti B."/>
            <person name="Smeianov V."/>
            <person name="Wechter W."/>
            <person name="Barabote R."/>
            <person name="Lorca G."/>
            <person name="Altermann E."/>
            <person name="Barrangou R."/>
            <person name="Ganesan B."/>
            <person name="Xie Y."/>
            <person name="Rawsthorne H."/>
            <person name="Tamir D."/>
            <person name="Parker C."/>
            <person name="Breidt F."/>
            <person name="Broadbent J.R."/>
            <person name="Hutkins R."/>
            <person name="O'Sullivan D."/>
            <person name="Steele J."/>
            <person name="Unlu G."/>
            <person name="Saier M.H. Jr."/>
            <person name="Klaenhammer T."/>
            <person name="Richardson P."/>
            <person name="Kozyavkin S."/>
            <person name="Weimer B.C."/>
            <person name="Mills D.A."/>
        </authorList>
    </citation>
    <scope>NUCLEOTIDE SEQUENCE [LARGE SCALE GENOMIC DNA]</scope>
    <source>
        <strain>ATCC 33323 / DSM 20243 / BCRC 14619 / CIP 102991 / JCM 1131 / KCTC 3163 / NCIMB 11718 / NCTC 13722 / AM63</strain>
    </source>
</reference>
<dbReference type="EMBL" id="CP000413">
    <property type="protein sequence ID" value="ABJ60214.1"/>
    <property type="molecule type" value="Genomic_DNA"/>
</dbReference>
<dbReference type="RefSeq" id="WP_003647471.1">
    <property type="nucleotide sequence ID" value="NZ_WBMG01000005.1"/>
</dbReference>
<dbReference type="SMR" id="Q044A8"/>
<dbReference type="GeneID" id="29638990"/>
<dbReference type="KEGG" id="lga:LGAS_0823"/>
<dbReference type="HOGENOM" id="CLU_017633_0_7_9"/>
<dbReference type="BioCyc" id="LGAS324831:G1G6Y-817-MONOMER"/>
<dbReference type="Proteomes" id="UP000000664">
    <property type="component" value="Chromosome"/>
</dbReference>
<dbReference type="GO" id="GO:0005737">
    <property type="term" value="C:cytoplasm"/>
    <property type="evidence" value="ECO:0007669"/>
    <property type="project" value="UniProtKB-SubCell"/>
</dbReference>
<dbReference type="GO" id="GO:0005524">
    <property type="term" value="F:ATP binding"/>
    <property type="evidence" value="ECO:0007669"/>
    <property type="project" value="InterPro"/>
</dbReference>
<dbReference type="GO" id="GO:0031072">
    <property type="term" value="F:heat shock protein binding"/>
    <property type="evidence" value="ECO:0007669"/>
    <property type="project" value="InterPro"/>
</dbReference>
<dbReference type="GO" id="GO:0051082">
    <property type="term" value="F:unfolded protein binding"/>
    <property type="evidence" value="ECO:0007669"/>
    <property type="project" value="UniProtKB-UniRule"/>
</dbReference>
<dbReference type="GO" id="GO:0008270">
    <property type="term" value="F:zinc ion binding"/>
    <property type="evidence" value="ECO:0007669"/>
    <property type="project" value="UniProtKB-UniRule"/>
</dbReference>
<dbReference type="GO" id="GO:0051085">
    <property type="term" value="P:chaperone cofactor-dependent protein refolding"/>
    <property type="evidence" value="ECO:0007669"/>
    <property type="project" value="TreeGrafter"/>
</dbReference>
<dbReference type="GO" id="GO:0006260">
    <property type="term" value="P:DNA replication"/>
    <property type="evidence" value="ECO:0007669"/>
    <property type="project" value="UniProtKB-KW"/>
</dbReference>
<dbReference type="GO" id="GO:0042026">
    <property type="term" value="P:protein refolding"/>
    <property type="evidence" value="ECO:0007669"/>
    <property type="project" value="TreeGrafter"/>
</dbReference>
<dbReference type="GO" id="GO:0009408">
    <property type="term" value="P:response to heat"/>
    <property type="evidence" value="ECO:0007669"/>
    <property type="project" value="InterPro"/>
</dbReference>
<dbReference type="CDD" id="cd06257">
    <property type="entry name" value="DnaJ"/>
    <property type="match status" value="1"/>
</dbReference>
<dbReference type="CDD" id="cd10747">
    <property type="entry name" value="DnaJ_C"/>
    <property type="match status" value="1"/>
</dbReference>
<dbReference type="CDD" id="cd10719">
    <property type="entry name" value="DnaJ_zf"/>
    <property type="match status" value="1"/>
</dbReference>
<dbReference type="FunFam" id="2.60.260.20:FF:000005">
    <property type="entry name" value="Chaperone protein dnaJ 1, mitochondrial"/>
    <property type="match status" value="1"/>
</dbReference>
<dbReference type="FunFam" id="1.10.287.110:FF:000031">
    <property type="entry name" value="Molecular chaperone DnaJ"/>
    <property type="match status" value="1"/>
</dbReference>
<dbReference type="FunFam" id="2.10.230.10:FF:000002">
    <property type="entry name" value="Molecular chaperone DnaJ"/>
    <property type="match status" value="1"/>
</dbReference>
<dbReference type="Gene3D" id="1.10.287.110">
    <property type="entry name" value="DnaJ domain"/>
    <property type="match status" value="1"/>
</dbReference>
<dbReference type="Gene3D" id="2.10.230.10">
    <property type="entry name" value="Heat shock protein DnaJ, cysteine-rich domain"/>
    <property type="match status" value="1"/>
</dbReference>
<dbReference type="Gene3D" id="2.60.260.20">
    <property type="entry name" value="Urease metallochaperone UreE, N-terminal domain"/>
    <property type="match status" value="2"/>
</dbReference>
<dbReference type="HAMAP" id="MF_01152">
    <property type="entry name" value="DnaJ"/>
    <property type="match status" value="1"/>
</dbReference>
<dbReference type="InterPro" id="IPR012724">
    <property type="entry name" value="DnaJ"/>
</dbReference>
<dbReference type="InterPro" id="IPR002939">
    <property type="entry name" value="DnaJ_C"/>
</dbReference>
<dbReference type="InterPro" id="IPR001623">
    <property type="entry name" value="DnaJ_domain"/>
</dbReference>
<dbReference type="InterPro" id="IPR018253">
    <property type="entry name" value="DnaJ_domain_CS"/>
</dbReference>
<dbReference type="InterPro" id="IPR008971">
    <property type="entry name" value="HSP40/DnaJ_pept-bd"/>
</dbReference>
<dbReference type="InterPro" id="IPR001305">
    <property type="entry name" value="HSP_DnaJ_Cys-rich_dom"/>
</dbReference>
<dbReference type="InterPro" id="IPR036410">
    <property type="entry name" value="HSP_DnaJ_Cys-rich_dom_sf"/>
</dbReference>
<dbReference type="InterPro" id="IPR036869">
    <property type="entry name" value="J_dom_sf"/>
</dbReference>
<dbReference type="NCBIfam" id="TIGR02349">
    <property type="entry name" value="DnaJ_bact"/>
    <property type="match status" value="1"/>
</dbReference>
<dbReference type="NCBIfam" id="NF008035">
    <property type="entry name" value="PRK10767.1"/>
    <property type="match status" value="1"/>
</dbReference>
<dbReference type="NCBIfam" id="NF010869">
    <property type="entry name" value="PRK14276.1"/>
    <property type="match status" value="1"/>
</dbReference>
<dbReference type="PANTHER" id="PTHR43096:SF48">
    <property type="entry name" value="CHAPERONE PROTEIN DNAJ"/>
    <property type="match status" value="1"/>
</dbReference>
<dbReference type="PANTHER" id="PTHR43096">
    <property type="entry name" value="DNAJ HOMOLOG 1, MITOCHONDRIAL-RELATED"/>
    <property type="match status" value="1"/>
</dbReference>
<dbReference type="Pfam" id="PF00226">
    <property type="entry name" value="DnaJ"/>
    <property type="match status" value="1"/>
</dbReference>
<dbReference type="Pfam" id="PF01556">
    <property type="entry name" value="DnaJ_C"/>
    <property type="match status" value="1"/>
</dbReference>
<dbReference type="Pfam" id="PF00684">
    <property type="entry name" value="DnaJ_CXXCXGXG"/>
    <property type="match status" value="1"/>
</dbReference>
<dbReference type="PRINTS" id="PR00625">
    <property type="entry name" value="JDOMAIN"/>
</dbReference>
<dbReference type="SMART" id="SM00271">
    <property type="entry name" value="DnaJ"/>
    <property type="match status" value="1"/>
</dbReference>
<dbReference type="SUPFAM" id="SSF46565">
    <property type="entry name" value="Chaperone J-domain"/>
    <property type="match status" value="1"/>
</dbReference>
<dbReference type="SUPFAM" id="SSF57938">
    <property type="entry name" value="DnaJ/Hsp40 cysteine-rich domain"/>
    <property type="match status" value="1"/>
</dbReference>
<dbReference type="SUPFAM" id="SSF49493">
    <property type="entry name" value="HSP40/DnaJ peptide-binding domain"/>
    <property type="match status" value="2"/>
</dbReference>
<dbReference type="PROSITE" id="PS00636">
    <property type="entry name" value="DNAJ_1"/>
    <property type="match status" value="1"/>
</dbReference>
<dbReference type="PROSITE" id="PS50076">
    <property type="entry name" value="DNAJ_2"/>
    <property type="match status" value="1"/>
</dbReference>
<dbReference type="PROSITE" id="PS51188">
    <property type="entry name" value="ZF_CR"/>
    <property type="match status" value="1"/>
</dbReference>
<evidence type="ECO:0000255" key="1">
    <source>
        <dbReference type="HAMAP-Rule" id="MF_01152"/>
    </source>
</evidence>
<gene>
    <name evidence="1" type="primary">dnaJ</name>
    <name type="ordered locus">LGAS_0823</name>
</gene>
<protein>
    <recommendedName>
        <fullName evidence="1">Chaperone protein DnaJ</fullName>
    </recommendedName>
</protein>
<name>DNAJ_LACGA</name>
<sequence length="388" mass="41859">MAQRDYYDVLGVDKNASESDINKAYRKLAKKYHPDLNHEPGAEEKYKEVNEAYEVLHDKQKKAQYDQFGQAGVNGQAGFGGQGYGGFGGQGGYSSQGFGDFGDIFGDIFGSAFGGGRSRVDPTAPQKGQDLDYTMTIDFMDAIKGKKTDITYTRSEVCPTCDGSGAEKGTHPITCDKCHGTGVMTVTRQTPLGVIQQQTTCDKCGGRGTIIKHPCQTCHGKGTIDKKQTLEVKVPAGIDNGQQIRLSGQGEAGKNGGPYGDLYIVFRVKPSKEFRRNGTTIYSEAPISFAQAALGDKIRVNTVHGPVDLTIPAGTQPNTNFKLRGQGVPKINGTGNGDQEVTVKVVIPKKINDKQKEALVDYVKAGGGNISPQEKNFFERLKDKLNGE</sequence>